<evidence type="ECO:0000250" key="1"/>
<evidence type="ECO:0000250" key="2">
    <source>
        <dbReference type="UniProtKB" id="P50213"/>
    </source>
</evidence>
<evidence type="ECO:0000255" key="3"/>
<evidence type="ECO:0000269" key="4">
    <source>
    </source>
</evidence>
<evidence type="ECO:0000305" key="5"/>
<dbReference type="EC" id="1.1.1.41" evidence="4"/>
<dbReference type="EMBL" id="CU329670">
    <property type="protein sequence ID" value="CAB16208.1"/>
    <property type="molecule type" value="Genomic_DNA"/>
</dbReference>
<dbReference type="PIR" id="T37546">
    <property type="entry name" value="T37546"/>
</dbReference>
<dbReference type="RefSeq" id="NP_594397.1">
    <property type="nucleotide sequence ID" value="NM_001019820.2"/>
</dbReference>
<dbReference type="SMR" id="O13696"/>
<dbReference type="BioGRID" id="278384">
    <property type="interactions" value="3"/>
</dbReference>
<dbReference type="ComplexPortal" id="CPX-559">
    <property type="entry name" value="Mitochondrial isocitrate dehydrogenase complex (NAD+)"/>
</dbReference>
<dbReference type="FunCoup" id="O13696">
    <property type="interactions" value="572"/>
</dbReference>
<dbReference type="STRING" id="284812.O13696"/>
<dbReference type="iPTMnet" id="O13696"/>
<dbReference type="PaxDb" id="4896-SPAC11G7.03.1"/>
<dbReference type="EnsemblFungi" id="SPAC11G7.03.1">
    <property type="protein sequence ID" value="SPAC11G7.03.1:pep"/>
    <property type="gene ID" value="SPAC11G7.03"/>
</dbReference>
<dbReference type="GeneID" id="2541894"/>
<dbReference type="KEGG" id="spo:2541894"/>
<dbReference type="PomBase" id="SPAC11G7.03">
    <property type="gene designation" value="idh1"/>
</dbReference>
<dbReference type="VEuPathDB" id="FungiDB:SPAC11G7.03"/>
<dbReference type="eggNOG" id="KOG0784">
    <property type="taxonomic scope" value="Eukaryota"/>
</dbReference>
<dbReference type="HOGENOM" id="CLU_031953_0_0_1"/>
<dbReference type="InParanoid" id="O13696"/>
<dbReference type="OMA" id="TCAHKAN"/>
<dbReference type="PhylomeDB" id="O13696"/>
<dbReference type="Reactome" id="R-SPO-71403">
    <property type="pathway name" value="Citric acid cycle (TCA cycle)"/>
</dbReference>
<dbReference type="PRO" id="PR:O13696"/>
<dbReference type="Proteomes" id="UP000002485">
    <property type="component" value="Chromosome I"/>
</dbReference>
<dbReference type="GO" id="GO:0005737">
    <property type="term" value="C:cytoplasm"/>
    <property type="evidence" value="ECO:0007005"/>
    <property type="project" value="PomBase"/>
</dbReference>
<dbReference type="GO" id="GO:0045242">
    <property type="term" value="C:isocitrate dehydrogenase complex (NAD+)"/>
    <property type="evidence" value="ECO:0000266"/>
    <property type="project" value="ComplexPortal"/>
</dbReference>
<dbReference type="GO" id="GO:0005759">
    <property type="term" value="C:mitochondrial matrix"/>
    <property type="evidence" value="ECO:0000250"/>
    <property type="project" value="PomBase"/>
</dbReference>
<dbReference type="GO" id="GO:0005739">
    <property type="term" value="C:mitochondrion"/>
    <property type="evidence" value="ECO:0000266"/>
    <property type="project" value="ComplexPortal"/>
</dbReference>
<dbReference type="GO" id="GO:0004449">
    <property type="term" value="F:isocitrate dehydrogenase (NAD+) activity"/>
    <property type="evidence" value="ECO:0007669"/>
    <property type="project" value="UniProtKB-EC"/>
</dbReference>
<dbReference type="GO" id="GO:0000287">
    <property type="term" value="F:magnesium ion binding"/>
    <property type="evidence" value="ECO:0007669"/>
    <property type="project" value="InterPro"/>
</dbReference>
<dbReference type="GO" id="GO:0051287">
    <property type="term" value="F:NAD binding"/>
    <property type="evidence" value="ECO:0007669"/>
    <property type="project" value="InterPro"/>
</dbReference>
<dbReference type="GO" id="GO:0003723">
    <property type="term" value="F:RNA binding"/>
    <property type="evidence" value="ECO:0007669"/>
    <property type="project" value="UniProtKB-KW"/>
</dbReference>
<dbReference type="GO" id="GO:0006102">
    <property type="term" value="P:isocitrate metabolic process"/>
    <property type="evidence" value="ECO:0000318"/>
    <property type="project" value="GO_Central"/>
</dbReference>
<dbReference type="GO" id="GO:0006099">
    <property type="term" value="P:tricarboxylic acid cycle"/>
    <property type="evidence" value="ECO:0000315"/>
    <property type="project" value="PomBase"/>
</dbReference>
<dbReference type="FunFam" id="3.40.718.10:FF:000001">
    <property type="entry name" value="Isocitrate dehydrogenase [NAD] subunit, mitochondrial"/>
    <property type="match status" value="1"/>
</dbReference>
<dbReference type="Gene3D" id="3.40.718.10">
    <property type="entry name" value="Isopropylmalate Dehydrogenase"/>
    <property type="match status" value="1"/>
</dbReference>
<dbReference type="InterPro" id="IPR019818">
    <property type="entry name" value="IsoCit/isopropylmalate_DH_CS"/>
</dbReference>
<dbReference type="InterPro" id="IPR004434">
    <property type="entry name" value="Isocitrate_DH_NAD"/>
</dbReference>
<dbReference type="InterPro" id="IPR024084">
    <property type="entry name" value="IsoPropMal-DH-like_dom"/>
</dbReference>
<dbReference type="NCBIfam" id="TIGR00175">
    <property type="entry name" value="mito_nad_idh"/>
    <property type="match status" value="1"/>
</dbReference>
<dbReference type="PANTHER" id="PTHR11835">
    <property type="entry name" value="DECARBOXYLATING DEHYDROGENASES-ISOCITRATE, ISOPROPYLMALATE, TARTRATE"/>
    <property type="match status" value="1"/>
</dbReference>
<dbReference type="PANTHER" id="PTHR11835:SF42">
    <property type="entry name" value="ISOCITRATE DEHYDROGENASE [NAD] SUBUNIT BETA, MITOCHONDRIAL"/>
    <property type="match status" value="1"/>
</dbReference>
<dbReference type="Pfam" id="PF00180">
    <property type="entry name" value="Iso_dh"/>
    <property type="match status" value="1"/>
</dbReference>
<dbReference type="SMART" id="SM01329">
    <property type="entry name" value="Iso_dh"/>
    <property type="match status" value="1"/>
</dbReference>
<dbReference type="SUPFAM" id="SSF53659">
    <property type="entry name" value="Isocitrate/Isopropylmalate dehydrogenase-like"/>
    <property type="match status" value="1"/>
</dbReference>
<dbReference type="PROSITE" id="PS00470">
    <property type="entry name" value="IDH_IMDH"/>
    <property type="match status" value="1"/>
</dbReference>
<comment type="function">
    <text evidence="4">Performs an essential role in the oxidative function of the citric acid cycle. Also binds RNA; specifically to the 5'-untranslated leaders of mitochondrial mRNAs.</text>
</comment>
<comment type="catalytic activity">
    <reaction evidence="4">
        <text>D-threo-isocitrate + NAD(+) = 2-oxoglutarate + CO2 + NADH</text>
        <dbReference type="Rhea" id="RHEA:23632"/>
        <dbReference type="ChEBI" id="CHEBI:15562"/>
        <dbReference type="ChEBI" id="CHEBI:16526"/>
        <dbReference type="ChEBI" id="CHEBI:16810"/>
        <dbReference type="ChEBI" id="CHEBI:57540"/>
        <dbReference type="ChEBI" id="CHEBI:57945"/>
        <dbReference type="EC" id="1.1.1.41"/>
    </reaction>
</comment>
<comment type="cofactor">
    <cofactor evidence="1">
        <name>Mg(2+)</name>
        <dbReference type="ChEBI" id="CHEBI:18420"/>
    </cofactor>
    <cofactor evidence="1">
        <name>Mn(2+)</name>
        <dbReference type="ChEBI" id="CHEBI:29035"/>
    </cofactor>
    <text evidence="1">Binds 1 Mg(2+) or Mn(2+) ion per subunit.</text>
</comment>
<comment type="subunit">
    <text evidence="1">Octamer of two non-identical subunits IDH1 and IDH2.</text>
</comment>
<comment type="subcellular location">
    <subcellularLocation>
        <location evidence="1">Mitochondrion</location>
    </subcellularLocation>
</comment>
<comment type="similarity">
    <text evidence="5">Belongs to the isocitrate and isopropylmalate dehydrogenases family.</text>
</comment>
<accession>O13696</accession>
<sequence>MFKSLVRKSSAFQPLKYGGKYTVTLIPGDGIGRETSNAVTEIFKTANVPIEFEEIDVTGMEKNNKSSGDALHEAIQSLKRNKVGLKGILFTPFEKGGHTSFNVALRKELDIYASLVLIKNIPGFKTRHDNVDFAIIRENTEGEYSGLEHQSVPGVVESLKIITEYKSKRIAQFAFDFALQNGRKSVTCIHKANIMKLADGLFRRTFYDVANGYDAITPKDLIVDNASMQAVSRPQQFDVLVMPNLYGSILSNIGSALVGGPGVIPGANFGRDYALFEPGCRHVGLSITGRGEANPTAAILSACLMLRHLGLKDYADLINAATYSVIEEGKTLTKDLGGSASTGDFTHAILERMESL</sequence>
<feature type="transit peptide" description="Mitochondrion" evidence="3">
    <location>
        <begin position="1"/>
        <end status="unknown"/>
    </location>
</feature>
<feature type="chain" id="PRO_0000014430" description="Isocitrate dehydrogenase [NAD] subunit 1, mitochondrial">
    <location>
        <begin status="unknown"/>
        <end position="356"/>
    </location>
</feature>
<feature type="binding site" evidence="1">
    <location>
        <position position="106"/>
    </location>
    <ligand>
        <name>substrate</name>
    </ligand>
</feature>
<feature type="binding site" evidence="1">
    <location>
        <position position="137"/>
    </location>
    <ligand>
        <name>substrate</name>
    </ligand>
</feature>
<feature type="binding site" evidence="2">
    <location>
        <position position="224"/>
    </location>
    <ligand>
        <name>Mg(2+)</name>
        <dbReference type="ChEBI" id="CHEBI:18420"/>
    </ligand>
</feature>
<feature type="binding site" evidence="1">
    <location>
        <position position="224"/>
    </location>
    <ligand>
        <name>substrate</name>
    </ligand>
</feature>
<feature type="site" description="Critical for catalysis" evidence="1">
    <location>
        <position position="144"/>
    </location>
</feature>
<feature type="site" description="Critical for catalysis" evidence="1">
    <location>
        <position position="191"/>
    </location>
</feature>
<proteinExistence type="evidence at protein level"/>
<organism>
    <name type="scientific">Schizosaccharomyces pombe (strain 972 / ATCC 24843)</name>
    <name type="common">Fission yeast</name>
    <dbReference type="NCBI Taxonomy" id="284812"/>
    <lineage>
        <taxon>Eukaryota</taxon>
        <taxon>Fungi</taxon>
        <taxon>Dikarya</taxon>
        <taxon>Ascomycota</taxon>
        <taxon>Taphrinomycotina</taxon>
        <taxon>Schizosaccharomycetes</taxon>
        <taxon>Schizosaccharomycetales</taxon>
        <taxon>Schizosaccharomycetaceae</taxon>
        <taxon>Schizosaccharomyces</taxon>
    </lineage>
</organism>
<keyword id="KW-0460">Magnesium</keyword>
<keyword id="KW-0464">Manganese</keyword>
<keyword id="KW-0479">Metal-binding</keyword>
<keyword id="KW-0496">Mitochondrion</keyword>
<keyword id="KW-0520">NAD</keyword>
<keyword id="KW-0560">Oxidoreductase</keyword>
<keyword id="KW-1185">Reference proteome</keyword>
<keyword id="KW-0694">RNA-binding</keyword>
<keyword id="KW-0809">Transit peptide</keyword>
<keyword id="KW-0816">Tricarboxylic acid cycle</keyword>
<name>IDH1_SCHPO</name>
<protein>
    <recommendedName>
        <fullName>Isocitrate dehydrogenase [NAD] subunit 1, mitochondrial</fullName>
        <ecNumber evidence="4">1.1.1.41</ecNumber>
    </recommendedName>
    <alternativeName>
        <fullName>Isocitric dehydrogenase</fullName>
    </alternativeName>
    <alternativeName>
        <fullName>NAD(+)-specific ICDH</fullName>
    </alternativeName>
</protein>
<reference key="1">
    <citation type="journal article" date="2002" name="Nature">
        <title>The genome sequence of Schizosaccharomyces pombe.</title>
        <authorList>
            <person name="Wood V."/>
            <person name="Gwilliam R."/>
            <person name="Rajandream M.A."/>
            <person name="Lyne M.H."/>
            <person name="Lyne R."/>
            <person name="Stewart A."/>
            <person name="Sgouros J.G."/>
            <person name="Peat N."/>
            <person name="Hayles J."/>
            <person name="Baker S.G."/>
            <person name="Basham D."/>
            <person name="Bowman S."/>
            <person name="Brooks K."/>
            <person name="Brown D."/>
            <person name="Brown S."/>
            <person name="Chillingworth T."/>
            <person name="Churcher C.M."/>
            <person name="Collins M."/>
            <person name="Connor R."/>
            <person name="Cronin A."/>
            <person name="Davis P."/>
            <person name="Feltwell T."/>
            <person name="Fraser A."/>
            <person name="Gentles S."/>
            <person name="Goble A."/>
            <person name="Hamlin N."/>
            <person name="Harris D.E."/>
            <person name="Hidalgo J."/>
            <person name="Hodgson G."/>
            <person name="Holroyd S."/>
            <person name="Hornsby T."/>
            <person name="Howarth S."/>
            <person name="Huckle E.J."/>
            <person name="Hunt S."/>
            <person name="Jagels K."/>
            <person name="James K.D."/>
            <person name="Jones L."/>
            <person name="Jones M."/>
            <person name="Leather S."/>
            <person name="McDonald S."/>
            <person name="McLean J."/>
            <person name="Mooney P."/>
            <person name="Moule S."/>
            <person name="Mungall K.L."/>
            <person name="Murphy L.D."/>
            <person name="Niblett D."/>
            <person name="Odell C."/>
            <person name="Oliver K."/>
            <person name="O'Neil S."/>
            <person name="Pearson D."/>
            <person name="Quail M.A."/>
            <person name="Rabbinowitsch E."/>
            <person name="Rutherford K.M."/>
            <person name="Rutter S."/>
            <person name="Saunders D."/>
            <person name="Seeger K."/>
            <person name="Sharp S."/>
            <person name="Skelton J."/>
            <person name="Simmonds M.N."/>
            <person name="Squares R."/>
            <person name="Squares S."/>
            <person name="Stevens K."/>
            <person name="Taylor K."/>
            <person name="Taylor R.G."/>
            <person name="Tivey A."/>
            <person name="Walsh S.V."/>
            <person name="Warren T."/>
            <person name="Whitehead S."/>
            <person name="Woodward J.R."/>
            <person name="Volckaert G."/>
            <person name="Aert R."/>
            <person name="Robben J."/>
            <person name="Grymonprez B."/>
            <person name="Weltjens I."/>
            <person name="Vanstreels E."/>
            <person name="Rieger M."/>
            <person name="Schaefer M."/>
            <person name="Mueller-Auer S."/>
            <person name="Gabel C."/>
            <person name="Fuchs M."/>
            <person name="Duesterhoeft A."/>
            <person name="Fritzc C."/>
            <person name="Holzer E."/>
            <person name="Moestl D."/>
            <person name="Hilbert H."/>
            <person name="Borzym K."/>
            <person name="Langer I."/>
            <person name="Beck A."/>
            <person name="Lehrach H."/>
            <person name="Reinhardt R."/>
            <person name="Pohl T.M."/>
            <person name="Eger P."/>
            <person name="Zimmermann W."/>
            <person name="Wedler H."/>
            <person name="Wambutt R."/>
            <person name="Purnelle B."/>
            <person name="Goffeau A."/>
            <person name="Cadieu E."/>
            <person name="Dreano S."/>
            <person name="Gloux S."/>
            <person name="Lelaure V."/>
            <person name="Mottier S."/>
            <person name="Galibert F."/>
            <person name="Aves S.J."/>
            <person name="Xiang Z."/>
            <person name="Hunt C."/>
            <person name="Moore K."/>
            <person name="Hurst S.M."/>
            <person name="Lucas M."/>
            <person name="Rochet M."/>
            <person name="Gaillardin C."/>
            <person name="Tallada V.A."/>
            <person name="Garzon A."/>
            <person name="Thode G."/>
            <person name="Daga R.R."/>
            <person name="Cruzado L."/>
            <person name="Jimenez J."/>
            <person name="Sanchez M."/>
            <person name="del Rey F."/>
            <person name="Benito J."/>
            <person name="Dominguez A."/>
            <person name="Revuelta J.L."/>
            <person name="Moreno S."/>
            <person name="Armstrong J."/>
            <person name="Forsburg S.L."/>
            <person name="Cerutti L."/>
            <person name="Lowe T."/>
            <person name="McCombie W.R."/>
            <person name="Paulsen I."/>
            <person name="Potashkin J."/>
            <person name="Shpakovski G.V."/>
            <person name="Ussery D."/>
            <person name="Barrell B.G."/>
            <person name="Nurse P."/>
        </authorList>
    </citation>
    <scope>NUCLEOTIDE SEQUENCE [LARGE SCALE GENOMIC DNA]</scope>
    <source>
        <strain>972 / ATCC 24843</strain>
    </source>
</reference>
<reference key="2">
    <citation type="journal article" date="2000" name="Curr. Genet.">
        <title>Isolation and RNA-binding analysis of NAD+ -isocitrate dehydrogenases from Kluyveromyces lactis and Schizosaccharomyces pombe.</title>
        <authorList>
            <person name="Elzinga S.D.J."/>
            <person name="van Oosterum K."/>
            <person name="Maat C."/>
            <person name="Grivell L.A."/>
            <person name="van der Spek H."/>
        </authorList>
    </citation>
    <scope>FUNCTION</scope>
    <scope>CATALYTIC ACTIVITY</scope>
    <scope>RNA-BINDING</scope>
</reference>
<gene>
    <name type="primary">idh1</name>
    <name type="ORF">SPAC11G7.03</name>
</gene>